<accession>Q1GJQ1</accession>
<reference key="1">
    <citation type="submission" date="2006-05" db="EMBL/GenBank/DDBJ databases">
        <title>Complete sequence of chromosome of Silicibacter sp. TM1040.</title>
        <authorList>
            <consortium name="US DOE Joint Genome Institute"/>
            <person name="Copeland A."/>
            <person name="Lucas S."/>
            <person name="Lapidus A."/>
            <person name="Barry K."/>
            <person name="Detter J.C."/>
            <person name="Glavina del Rio T."/>
            <person name="Hammon N."/>
            <person name="Israni S."/>
            <person name="Dalin E."/>
            <person name="Tice H."/>
            <person name="Pitluck S."/>
            <person name="Brettin T."/>
            <person name="Bruce D."/>
            <person name="Han C."/>
            <person name="Tapia R."/>
            <person name="Goodwin L."/>
            <person name="Thompson L.S."/>
            <person name="Gilna P."/>
            <person name="Schmutz J."/>
            <person name="Larimer F."/>
            <person name="Land M."/>
            <person name="Hauser L."/>
            <person name="Kyrpides N."/>
            <person name="Kim E."/>
            <person name="Belas R."/>
            <person name="Moran M.A."/>
            <person name="Buchan A."/>
            <person name="Gonzalez J.M."/>
            <person name="Schell M.A."/>
            <person name="Sun F."/>
            <person name="Richardson P."/>
        </authorList>
    </citation>
    <scope>NUCLEOTIDE SEQUENCE [LARGE SCALE GENOMIC DNA]</scope>
    <source>
        <strain>TM1040</strain>
    </source>
</reference>
<protein>
    <recommendedName>
        <fullName evidence="1">Urease accessory protein UreE</fullName>
    </recommendedName>
</protein>
<organism>
    <name type="scientific">Ruegeria sp. (strain TM1040)</name>
    <name type="common">Silicibacter sp.</name>
    <dbReference type="NCBI Taxonomy" id="292414"/>
    <lineage>
        <taxon>Bacteria</taxon>
        <taxon>Pseudomonadati</taxon>
        <taxon>Pseudomonadota</taxon>
        <taxon>Alphaproteobacteria</taxon>
        <taxon>Rhodobacterales</taxon>
        <taxon>Roseobacteraceae</taxon>
        <taxon>Ruegeria</taxon>
    </lineage>
</organism>
<name>UREE_RUEST</name>
<gene>
    <name evidence="1" type="primary">ureE</name>
    <name type="ordered locus">TM1040_0382</name>
</gene>
<dbReference type="EMBL" id="CP000377">
    <property type="protein sequence ID" value="ABF63115.1"/>
    <property type="molecule type" value="Genomic_DNA"/>
</dbReference>
<dbReference type="RefSeq" id="WP_011537730.1">
    <property type="nucleotide sequence ID" value="NC_008044.1"/>
</dbReference>
<dbReference type="SMR" id="Q1GJQ1"/>
<dbReference type="STRING" id="292414.TM1040_0382"/>
<dbReference type="KEGG" id="sit:TM1040_0382"/>
<dbReference type="eggNOG" id="COG2371">
    <property type="taxonomic scope" value="Bacteria"/>
</dbReference>
<dbReference type="HOGENOM" id="CLU_093757_1_0_5"/>
<dbReference type="OrthoDB" id="9802215at2"/>
<dbReference type="Proteomes" id="UP000000636">
    <property type="component" value="Chromosome"/>
</dbReference>
<dbReference type="GO" id="GO:0005737">
    <property type="term" value="C:cytoplasm"/>
    <property type="evidence" value="ECO:0007669"/>
    <property type="project" value="UniProtKB-SubCell"/>
</dbReference>
<dbReference type="GO" id="GO:0016151">
    <property type="term" value="F:nickel cation binding"/>
    <property type="evidence" value="ECO:0007669"/>
    <property type="project" value="UniProtKB-UniRule"/>
</dbReference>
<dbReference type="GO" id="GO:0051082">
    <property type="term" value="F:unfolded protein binding"/>
    <property type="evidence" value="ECO:0007669"/>
    <property type="project" value="UniProtKB-UniRule"/>
</dbReference>
<dbReference type="GO" id="GO:0006457">
    <property type="term" value="P:protein folding"/>
    <property type="evidence" value="ECO:0007669"/>
    <property type="project" value="InterPro"/>
</dbReference>
<dbReference type="GO" id="GO:0065003">
    <property type="term" value="P:protein-containing complex assembly"/>
    <property type="evidence" value="ECO:0007669"/>
    <property type="project" value="InterPro"/>
</dbReference>
<dbReference type="GO" id="GO:0019627">
    <property type="term" value="P:urea metabolic process"/>
    <property type="evidence" value="ECO:0007669"/>
    <property type="project" value="InterPro"/>
</dbReference>
<dbReference type="CDD" id="cd00571">
    <property type="entry name" value="UreE"/>
    <property type="match status" value="1"/>
</dbReference>
<dbReference type="Gene3D" id="2.60.260.20">
    <property type="entry name" value="Urease metallochaperone UreE, N-terminal domain"/>
    <property type="match status" value="1"/>
</dbReference>
<dbReference type="Gene3D" id="3.30.70.790">
    <property type="entry name" value="UreE, C-terminal domain"/>
    <property type="match status" value="1"/>
</dbReference>
<dbReference type="HAMAP" id="MF_00822">
    <property type="entry name" value="UreE"/>
    <property type="match status" value="1"/>
</dbReference>
<dbReference type="InterPro" id="IPR012406">
    <property type="entry name" value="UreE"/>
</dbReference>
<dbReference type="InterPro" id="IPR007864">
    <property type="entry name" value="UreE_C_dom"/>
</dbReference>
<dbReference type="InterPro" id="IPR004029">
    <property type="entry name" value="UreE_N"/>
</dbReference>
<dbReference type="InterPro" id="IPR036118">
    <property type="entry name" value="UreE_N_sf"/>
</dbReference>
<dbReference type="NCBIfam" id="NF009758">
    <property type="entry name" value="PRK13261.2-4"/>
    <property type="match status" value="1"/>
</dbReference>
<dbReference type="Pfam" id="PF05194">
    <property type="entry name" value="UreE_C"/>
    <property type="match status" value="1"/>
</dbReference>
<dbReference type="Pfam" id="PF02814">
    <property type="entry name" value="UreE_N"/>
    <property type="match status" value="1"/>
</dbReference>
<dbReference type="SMART" id="SM00988">
    <property type="entry name" value="UreE_N"/>
    <property type="match status" value="1"/>
</dbReference>
<dbReference type="SUPFAM" id="SSF69737">
    <property type="entry name" value="Urease metallochaperone UreE, C-terminal domain"/>
    <property type="match status" value="1"/>
</dbReference>
<dbReference type="SUPFAM" id="SSF69287">
    <property type="entry name" value="Urease metallochaperone UreE, N-terminal domain"/>
    <property type="match status" value="1"/>
</dbReference>
<sequence>MSAPRLIARHYHGHPHDESPRDCVVLDYDARFLRRKVLTCESGERLLVDLSHTTSLDHDGVLLLEGGGEIRVVAAPEPLLEVTADHLPRMAWHIGNRHTPCQIEASRLLIQRDHVIRAMLEQLGAQLREVEEPFTPEGGAYGHGRTHAHEHGHTNHHGQHHDHADHGHSHDHSHDQ</sequence>
<keyword id="KW-0143">Chaperone</keyword>
<keyword id="KW-0963">Cytoplasm</keyword>
<keyword id="KW-0533">Nickel</keyword>
<keyword id="KW-0996">Nickel insertion</keyword>
<keyword id="KW-1185">Reference proteome</keyword>
<comment type="function">
    <text evidence="1">Involved in urease metallocenter assembly. Binds nickel. Probably functions as a nickel donor during metallocenter assembly.</text>
</comment>
<comment type="subcellular location">
    <subcellularLocation>
        <location evidence="1">Cytoplasm</location>
    </subcellularLocation>
</comment>
<comment type="similarity">
    <text evidence="1">Belongs to the UreE family.</text>
</comment>
<feature type="chain" id="PRO_1000062560" description="Urease accessory protein UreE">
    <location>
        <begin position="1"/>
        <end position="176"/>
    </location>
</feature>
<feature type="region of interest" description="Disordered" evidence="2">
    <location>
        <begin position="134"/>
        <end position="176"/>
    </location>
</feature>
<feature type="compositionally biased region" description="Basic and acidic residues" evidence="2">
    <location>
        <begin position="161"/>
        <end position="176"/>
    </location>
</feature>
<evidence type="ECO:0000255" key="1">
    <source>
        <dbReference type="HAMAP-Rule" id="MF_00822"/>
    </source>
</evidence>
<evidence type="ECO:0000256" key="2">
    <source>
        <dbReference type="SAM" id="MobiDB-lite"/>
    </source>
</evidence>
<proteinExistence type="inferred from homology"/>